<accession>Q09950</accession>
<proteinExistence type="predicted"/>
<organism>
    <name type="scientific">Caenorhabditis elegans</name>
    <dbReference type="NCBI Taxonomy" id="6239"/>
    <lineage>
        <taxon>Eukaryota</taxon>
        <taxon>Metazoa</taxon>
        <taxon>Ecdysozoa</taxon>
        <taxon>Nematoda</taxon>
        <taxon>Chromadorea</taxon>
        <taxon>Rhabditida</taxon>
        <taxon>Rhabditina</taxon>
        <taxon>Rhabditomorpha</taxon>
        <taxon>Rhabditoidea</taxon>
        <taxon>Rhabditidae</taxon>
        <taxon>Peloderinae</taxon>
        <taxon>Caenorhabditis</taxon>
    </lineage>
</organism>
<name>YSR2_CAEEL</name>
<protein>
    <recommendedName>
        <fullName>Uncharacterized protein F59B10.2</fullName>
    </recommendedName>
</protein>
<dbReference type="EMBL" id="Z48716">
    <property type="protein sequence ID" value="CAA88601.3"/>
    <property type="molecule type" value="Genomic_DNA"/>
</dbReference>
<dbReference type="PIR" id="T22981">
    <property type="entry name" value="T22981"/>
</dbReference>
<dbReference type="RefSeq" id="NP_496263.2">
    <property type="nucleotide sequence ID" value="NM_063862.5"/>
</dbReference>
<dbReference type="SMR" id="Q09950"/>
<dbReference type="FunCoup" id="Q09950">
    <property type="interactions" value="1516"/>
</dbReference>
<dbReference type="STRING" id="6239.F59B10.2.1"/>
<dbReference type="PaxDb" id="6239-F59B10.2"/>
<dbReference type="EnsemblMetazoa" id="F59B10.2.1">
    <property type="protein sequence ID" value="F59B10.2.1"/>
    <property type="gene ID" value="WBGene00010318"/>
</dbReference>
<dbReference type="GeneID" id="186598"/>
<dbReference type="KEGG" id="cel:CELE_F59B10.2"/>
<dbReference type="UCSC" id="F59B10.2">
    <property type="organism name" value="c. elegans"/>
</dbReference>
<dbReference type="AGR" id="WB:WBGene00010318"/>
<dbReference type="CTD" id="186598"/>
<dbReference type="WormBase" id="F59B10.2">
    <property type="protein sequence ID" value="CE44434"/>
    <property type="gene ID" value="WBGene00010318"/>
</dbReference>
<dbReference type="eggNOG" id="ENOG502TFT2">
    <property type="taxonomic scope" value="Eukaryota"/>
</dbReference>
<dbReference type="HOGENOM" id="CLU_588271_0_0_1"/>
<dbReference type="InParanoid" id="Q09950"/>
<dbReference type="OMA" id="MEYAAVC"/>
<dbReference type="OrthoDB" id="5875663at2759"/>
<dbReference type="PRO" id="PR:Q09950"/>
<dbReference type="Proteomes" id="UP000001940">
    <property type="component" value="Chromosome II"/>
</dbReference>
<dbReference type="Bgee" id="WBGene00010318">
    <property type="expression patterns" value="Expressed in anatomical system and 4 other cell types or tissues"/>
</dbReference>
<feature type="chain" id="PRO_0000065383" description="Uncharacterized protein F59B10.2">
    <location>
        <begin position="1"/>
        <end position="532"/>
    </location>
</feature>
<feature type="region of interest" description="Disordered" evidence="1">
    <location>
        <begin position="26"/>
        <end position="84"/>
    </location>
</feature>
<feature type="region of interest" description="Disordered" evidence="1">
    <location>
        <begin position="97"/>
        <end position="129"/>
    </location>
</feature>
<feature type="region of interest" description="Disordered" evidence="1">
    <location>
        <begin position="157"/>
        <end position="470"/>
    </location>
</feature>
<feature type="compositionally biased region" description="Low complexity" evidence="1">
    <location>
        <begin position="30"/>
        <end position="40"/>
    </location>
</feature>
<feature type="compositionally biased region" description="Polar residues" evidence="1">
    <location>
        <begin position="67"/>
        <end position="80"/>
    </location>
</feature>
<feature type="compositionally biased region" description="Basic and acidic residues" evidence="1">
    <location>
        <begin position="157"/>
        <end position="181"/>
    </location>
</feature>
<feature type="compositionally biased region" description="Low complexity" evidence="1">
    <location>
        <begin position="198"/>
        <end position="213"/>
    </location>
</feature>
<feature type="compositionally biased region" description="Basic and acidic residues" evidence="1">
    <location>
        <begin position="237"/>
        <end position="249"/>
    </location>
</feature>
<feature type="compositionally biased region" description="Low complexity" evidence="1">
    <location>
        <begin position="259"/>
        <end position="290"/>
    </location>
</feature>
<feature type="compositionally biased region" description="Low complexity" evidence="1">
    <location>
        <begin position="298"/>
        <end position="315"/>
    </location>
</feature>
<feature type="compositionally biased region" description="Low complexity" evidence="1">
    <location>
        <begin position="326"/>
        <end position="335"/>
    </location>
</feature>
<feature type="compositionally biased region" description="Basic residues" evidence="1">
    <location>
        <begin position="347"/>
        <end position="356"/>
    </location>
</feature>
<feature type="compositionally biased region" description="Basic and acidic residues" evidence="1">
    <location>
        <begin position="357"/>
        <end position="368"/>
    </location>
</feature>
<feature type="compositionally biased region" description="Basic and acidic residues" evidence="1">
    <location>
        <begin position="389"/>
        <end position="403"/>
    </location>
</feature>
<feature type="compositionally biased region" description="Basic and acidic residues" evidence="1">
    <location>
        <begin position="410"/>
        <end position="419"/>
    </location>
</feature>
<feature type="compositionally biased region" description="Basic and acidic residues" evidence="1">
    <location>
        <begin position="437"/>
        <end position="448"/>
    </location>
</feature>
<feature type="compositionally biased region" description="Basic residues" evidence="1">
    <location>
        <begin position="449"/>
        <end position="461"/>
    </location>
</feature>
<reference key="1">
    <citation type="journal article" date="1998" name="Science">
        <title>Genome sequence of the nematode C. elegans: a platform for investigating biology.</title>
        <authorList>
            <consortium name="The C. elegans sequencing consortium"/>
        </authorList>
    </citation>
    <scope>NUCLEOTIDE SEQUENCE [LARGE SCALE GENOMIC DNA]</scope>
    <source>
        <strain>Bristol N2</strain>
    </source>
</reference>
<keyword id="KW-1185">Reference proteome</keyword>
<sequence>MRPSTASTPLSSSALNYLESFERNAKALRGNNNGSSTSGGNKKDESSTSKSIVSSPAPVKRRVSISDIISQARRQVSLSRTDSEDFDFLNESLKSSVFDESVSSDTDSEESHEEKRILPLGTPGQQVGRKSLKDIRELRNSIDQSLIKPPELKMLRSKAAGEESKRHAHFESIQEEEKISEDLPTAQLPSKSPFKKAIQSGSESSDSDSIIFDEVFEEVLPSPPRKPAPARTAPIVVEKKIEKPAVKEQKARKKKEKTPTPTESSFESSSDSSSTSESSTSSESSSSASESESESKSESQVSSSKTSTSKASSSKAYGSDFESEKSSSSSASTISKVTPKKLDKPQKTKKPDKKRAKPDDIRQNKKPEPIPYEDFIPKLSSRSSNSEKSTVRETNRTLEESLKKTLKINKSSEKMEKPRKDIRRAPRSSSSSSSTLRDAEREQDIERRREKRARRFRSRRRRSEEPHTCQENIHNMIESVIDTHVQMLDDFNRMEYAAVCEWTQVLRKFDGHDGPSSQKLREIIERRLNRKY</sequence>
<evidence type="ECO:0000256" key="1">
    <source>
        <dbReference type="SAM" id="MobiDB-lite"/>
    </source>
</evidence>
<gene>
    <name type="ORF">F59B10.2</name>
</gene>